<comment type="function">
    <text evidence="2">Involved in the detoxification of xenobiotics and in the activation of ester and amide prodrugs. Hydrolyzes aromatic and aliphatic esters, but has no catalytic activity toward amides or a fatty acyl-CoA ester. Displays fatty acid ethyl ester synthase activity, catalyzing the ethyl esterification of oleic acid to ethyloleate. Converts monoacylglycerides to free fatty acids and glycerol. Hydrolyzes of 2-arachidonoylglycerol and prostaglandins. Hydrolyzes cellular cholesteryl esters to free cholesterols and promotes reverse cholesterol transport (RCT) by facilitating both the initial and final steps in the process. First of all, allows free cholesterol efflux from macrophages to extracellular cholesterol acceptors and secondly, releases free cholesterol from lipoprotein-delivered cholesteryl esters in the liver for bile acid synthesis or direct secretion into the bile.</text>
</comment>
<comment type="catalytic activity">
    <reaction evidence="4">
        <text>a carboxylic ester + H2O = an alcohol + a carboxylate + H(+)</text>
        <dbReference type="Rhea" id="RHEA:21164"/>
        <dbReference type="ChEBI" id="CHEBI:15377"/>
        <dbReference type="ChEBI" id="CHEBI:15378"/>
        <dbReference type="ChEBI" id="CHEBI:29067"/>
        <dbReference type="ChEBI" id="CHEBI:30879"/>
        <dbReference type="ChEBI" id="CHEBI:33308"/>
        <dbReference type="EC" id="3.1.1.1"/>
    </reaction>
</comment>
<comment type="catalytic activity">
    <reaction evidence="2">
        <text>cholesteryl (9Z-octadecenoate) + H2O = cholesterol + (9Z)-octadecenoate + H(+)</text>
        <dbReference type="Rhea" id="RHEA:33875"/>
        <dbReference type="ChEBI" id="CHEBI:15377"/>
        <dbReference type="ChEBI" id="CHEBI:15378"/>
        <dbReference type="ChEBI" id="CHEBI:16113"/>
        <dbReference type="ChEBI" id="CHEBI:30823"/>
        <dbReference type="ChEBI" id="CHEBI:46898"/>
    </reaction>
    <physiologicalReaction direction="left-to-right" evidence="2">
        <dbReference type="Rhea" id="RHEA:33876"/>
    </physiologicalReaction>
</comment>
<comment type="catalytic activity">
    <reaction evidence="2">
        <text>2-(5Z,8Z,11Z,14Z-eicosatetraenoyl)-glycerol + H2O = glycerol + (5Z,8Z,11Z,14Z)-eicosatetraenoate + H(+)</text>
        <dbReference type="Rhea" id="RHEA:26132"/>
        <dbReference type="ChEBI" id="CHEBI:15377"/>
        <dbReference type="ChEBI" id="CHEBI:15378"/>
        <dbReference type="ChEBI" id="CHEBI:17754"/>
        <dbReference type="ChEBI" id="CHEBI:32395"/>
        <dbReference type="ChEBI" id="CHEBI:52392"/>
    </reaction>
    <physiologicalReaction direction="left-to-right" evidence="2">
        <dbReference type="Rhea" id="RHEA:26133"/>
    </physiologicalReaction>
</comment>
<comment type="catalytic activity">
    <reaction evidence="2">
        <text>prostaglandin E2 1-glyceryl ester + H2O = prostaglandin E2 + glycerol + H(+)</text>
        <dbReference type="Rhea" id="RHEA:48296"/>
        <dbReference type="ChEBI" id="CHEBI:15377"/>
        <dbReference type="ChEBI" id="CHEBI:15378"/>
        <dbReference type="ChEBI" id="CHEBI:17754"/>
        <dbReference type="ChEBI" id="CHEBI:90230"/>
        <dbReference type="ChEBI" id="CHEBI:606564"/>
    </reaction>
    <physiologicalReaction direction="left-to-right" evidence="2">
        <dbReference type="Rhea" id="RHEA:48297"/>
    </physiologicalReaction>
</comment>
<comment type="catalytic activity">
    <reaction evidence="2">
        <text>a cholesterol ester + H2O = cholesterol + a fatty acid + H(+)</text>
        <dbReference type="Rhea" id="RHEA:36403"/>
        <dbReference type="ChEBI" id="CHEBI:15377"/>
        <dbReference type="ChEBI" id="CHEBI:15378"/>
        <dbReference type="ChEBI" id="CHEBI:16113"/>
        <dbReference type="ChEBI" id="CHEBI:17002"/>
        <dbReference type="ChEBI" id="CHEBI:28868"/>
        <dbReference type="EC" id="3.1.1.13"/>
    </reaction>
    <physiologicalReaction direction="left-to-right" evidence="2">
        <dbReference type="Rhea" id="RHEA:36404"/>
    </physiologicalReaction>
</comment>
<comment type="catalytic activity">
    <reaction evidence="2">
        <text>prostaglandin F2alpha 1-glyceryl ester + H2O = prostaglandin F2alpha + glycerol + H(+)</text>
        <dbReference type="Rhea" id="RHEA:48300"/>
        <dbReference type="ChEBI" id="CHEBI:15377"/>
        <dbReference type="ChEBI" id="CHEBI:15378"/>
        <dbReference type="ChEBI" id="CHEBI:17754"/>
        <dbReference type="ChEBI" id="CHEBI:57404"/>
        <dbReference type="ChEBI" id="CHEBI:90233"/>
    </reaction>
    <physiologicalReaction direction="left-to-right" evidence="2">
        <dbReference type="Rhea" id="RHEA:48301"/>
    </physiologicalReaction>
</comment>
<comment type="subunit">
    <text evidence="2">Homotrimer and homohexamer. Binds to beta-glucuronidase (By similarity).</text>
</comment>
<comment type="subcellular location">
    <subcellularLocation>
        <location evidence="2">Endoplasmic reticulum lumen</location>
    </subcellularLocation>
    <subcellularLocation>
        <location evidence="2">Cytoplasm</location>
    </subcellularLocation>
    <subcellularLocation>
        <location evidence="2">Lipid droplet</location>
    </subcellularLocation>
    <text evidence="2">Moves from cytoplasm to lipid droplets upon lipid loading. Associates with lipid droplets independently of triglycerides (TG) content of the droplets and hydrolyzes cholesteryl esters more efficiently from mixed droplets.</text>
</comment>
<comment type="tissue specificity">
    <text evidence="5">Detected in kidney, liver and lung.</text>
</comment>
<comment type="induction">
    <text evidence="5">Up-regulated in liver upon feeding a diet enriched in cholestyramine or cholate.</text>
</comment>
<comment type="similarity">
    <text evidence="7">Belongs to the type-B carboxylesterase/lipase family.</text>
</comment>
<proteinExistence type="evidence at protein level"/>
<name>EST1_MOUSE</name>
<gene>
    <name evidence="8" type="primary">Ces1</name>
    <name type="synonym">Ces1g</name>
</gene>
<keyword id="KW-0963">Cytoplasm</keyword>
<keyword id="KW-1015">Disulfide bond</keyword>
<keyword id="KW-0256">Endoplasmic reticulum</keyword>
<keyword id="KW-0325">Glycoprotein</keyword>
<keyword id="KW-0378">Hydrolase</keyword>
<keyword id="KW-0551">Lipid droplet</keyword>
<keyword id="KW-0443">Lipid metabolism</keyword>
<keyword id="KW-0597">Phosphoprotein</keyword>
<keyword id="KW-1185">Reference proteome</keyword>
<keyword id="KW-0719">Serine esterase</keyword>
<keyword id="KW-0732">Signal</keyword>
<sequence length="565" mass="62680">MWLCALSLISLTACLSLGHPSLPPVVHTVHGKVLGKYVTLEGFSQPVAVFLGVPFAKPPLGSLRFAPPEPAEPWSFVKHTTSYPPLCYQNPEAALRLAELFTNQRKIIPHKFSEDCLYLNIYTPADLTQNSRLPVMVWIHGGGLVIDGASTYDGVPLAVHENVVVVVIQYRLGIWGFFSTEDEHSRGNWGHLDQVAALHWVQDNIANFGGNPGSVTIFGESAGGESVSVLVLSPLAKNLFHRAIAQSSVIFNPCLFGRAARPLAKKIAALAGCKTTTSAAMVHCLRQKTEDELLEVSLKMKFGTVDFLGDPRESYPFLPTVIDGVLLPKAPEEILAEKSFNTVPYMVGINKHEFGWIIPMFLDFPLSERKLDQKTAASILWQAYPILNISEKLIPAAIEKYLGGTEDPATMTDLFLDLIGDIMFGVPSVIVSRSHRDAGAPTYMYEYQYRPSFVSDDRPQELLGDHADELFSVWGAPFLKEGASEEEINLSKMVMKFWANFARNGNPNGEGLPHWPEYDQKEGYLQIGVPAQAAHRLKDKEVDFWTELRAKETAERSSHREHVEL</sequence>
<feature type="signal peptide" evidence="1">
    <location>
        <begin position="1"/>
        <end position="18"/>
    </location>
</feature>
<feature type="chain" id="PRO_0000008571" description="Liver carboxylesterase 1">
    <location>
        <begin position="19"/>
        <end position="565"/>
    </location>
</feature>
<feature type="active site" description="Acyl-ester intermediate" evidence="4">
    <location>
        <position position="221"/>
    </location>
</feature>
<feature type="active site" description="Charge relay system" evidence="2">
    <location>
        <position position="353"/>
    </location>
</feature>
<feature type="active site" description="Charge relay system" evidence="2">
    <location>
        <position position="466"/>
    </location>
</feature>
<feature type="modified residue" description="Phosphoserine" evidence="2">
    <location>
        <position position="378"/>
    </location>
</feature>
<feature type="glycosylation site" description="N-linked (GlcNAc...) asparagine" evidence="3">
    <location>
        <position position="388"/>
    </location>
</feature>
<feature type="glycosylation site" description="N-linked (GlcNAc...) asparagine" evidence="3">
    <location>
        <position position="489"/>
    </location>
</feature>
<feature type="disulfide bond" evidence="2">
    <location>
        <begin position="87"/>
        <end position="116"/>
    </location>
</feature>
<feature type="disulfide bond" evidence="2">
    <location>
        <begin position="273"/>
        <end position="284"/>
    </location>
</feature>
<feature type="sequence conflict" description="In Ref. 1; CAA73388." evidence="7" ref="1">
    <original>L</original>
    <variation>R</variation>
    <location>
        <position position="100"/>
    </location>
</feature>
<feature type="sequence conflict" description="In Ref. 1; CAA73388." evidence="7" ref="1">
    <original>D</original>
    <variation>E</variation>
    <location>
        <position position="372"/>
    </location>
</feature>
<feature type="sequence conflict" description="In Ref. 1; CAA73388." evidence="7" ref="1">
    <original>K</original>
    <variation>N</variation>
    <location>
        <position position="492"/>
    </location>
</feature>
<reference key="1">
    <citation type="journal article" date="1998" name="Biochim. Biophys. Acta">
        <title>Cloning and sequencing of a novel murine liver carboxylesterase cDNA.</title>
        <authorList>
            <person name="Ellinghaus P."/>
            <person name="Seedorf U."/>
            <person name="Assmann G."/>
        </authorList>
    </citation>
    <scope>NUCLEOTIDE SEQUENCE [MRNA]</scope>
    <scope>INDUCTION</scope>
    <scope>TISSUE SPECIFICITY</scope>
    <source>
        <strain>C57BL/6 X CBA</strain>
        <tissue>Liver</tissue>
    </source>
</reference>
<reference key="2">
    <citation type="journal article" date="2004" name="Genome Res.">
        <title>The status, quality, and expansion of the NIH full-length cDNA project: the Mammalian Gene Collection (MGC).</title>
        <authorList>
            <consortium name="The MGC Project Team"/>
        </authorList>
    </citation>
    <scope>NUCLEOTIDE SEQUENCE [LARGE SCALE MRNA]</scope>
    <source>
        <strain>FVB/N</strain>
        <tissue>Liver</tissue>
    </source>
</reference>
<reference key="3">
    <citation type="journal article" date="2010" name="Cell">
        <title>A tissue-specific atlas of mouse protein phosphorylation and expression.</title>
        <authorList>
            <person name="Huttlin E.L."/>
            <person name="Jedrychowski M.P."/>
            <person name="Elias J.E."/>
            <person name="Goswami T."/>
            <person name="Rad R."/>
            <person name="Beausoleil S.A."/>
            <person name="Villen J."/>
            <person name="Haas W."/>
            <person name="Sowa M.E."/>
            <person name="Gygi S.P."/>
        </authorList>
    </citation>
    <scope>IDENTIFICATION BY MASS SPECTROMETRY [LARGE SCALE ANALYSIS]</scope>
    <source>
        <tissue>Liver</tissue>
    </source>
</reference>
<accession>Q8VCC2</accession>
<accession>O55136</accession>
<dbReference type="EC" id="3.1.1.1" evidence="2"/>
<dbReference type="EC" id="3.1.1.13" evidence="2"/>
<dbReference type="EMBL" id="Y12887">
    <property type="protein sequence ID" value="CAA73388.1"/>
    <property type="molecule type" value="mRNA"/>
</dbReference>
<dbReference type="EMBL" id="BC021150">
    <property type="protein sequence ID" value="AAH21150.1"/>
    <property type="molecule type" value="mRNA"/>
</dbReference>
<dbReference type="EMBL" id="BC026897">
    <property type="protein sequence ID" value="AAH26897.1"/>
    <property type="molecule type" value="mRNA"/>
</dbReference>
<dbReference type="CCDS" id="CCDS22531.1"/>
<dbReference type="RefSeq" id="NP_067431.2">
    <property type="nucleotide sequence ID" value="NM_021456.4"/>
</dbReference>
<dbReference type="SMR" id="Q8VCC2"/>
<dbReference type="BioGRID" id="198678">
    <property type="interactions" value="6"/>
</dbReference>
<dbReference type="FunCoup" id="Q8VCC2">
    <property type="interactions" value="89"/>
</dbReference>
<dbReference type="STRING" id="10090.ENSMUSP00000037555"/>
<dbReference type="ChEMBL" id="CHEMBL4105953"/>
<dbReference type="ESTHER" id="mouse-Ces1g">
    <property type="family name" value="Carb_B_Chordata"/>
</dbReference>
<dbReference type="MEROPS" id="S09.972"/>
<dbReference type="GlyCosmos" id="Q8VCC2">
    <property type="glycosylation" value="2 sites, No reported glycans"/>
</dbReference>
<dbReference type="GlyGen" id="Q8VCC2">
    <property type="glycosylation" value="2 sites"/>
</dbReference>
<dbReference type="iPTMnet" id="Q8VCC2"/>
<dbReference type="PhosphoSitePlus" id="Q8VCC2"/>
<dbReference type="SwissPalm" id="Q8VCC2"/>
<dbReference type="CPTAC" id="non-CPTAC-3464"/>
<dbReference type="jPOST" id="Q8VCC2"/>
<dbReference type="PaxDb" id="10090-ENSMUSP00000037555"/>
<dbReference type="PeptideAtlas" id="Q8VCC2"/>
<dbReference type="ProteomicsDB" id="275785"/>
<dbReference type="DNASU" id="12623"/>
<dbReference type="Ensembl" id="ENSMUST00000044602.8">
    <property type="protein sequence ID" value="ENSMUSP00000037555.8"/>
    <property type="gene ID" value="ENSMUSG00000057074.7"/>
</dbReference>
<dbReference type="GeneID" id="12623"/>
<dbReference type="KEGG" id="mmu:12623"/>
<dbReference type="UCSC" id="uc009muq.2">
    <property type="organism name" value="mouse"/>
</dbReference>
<dbReference type="AGR" id="MGI:88378"/>
<dbReference type="CTD" id="12623"/>
<dbReference type="MGI" id="MGI:88378">
    <property type="gene designation" value="Ces1g"/>
</dbReference>
<dbReference type="VEuPathDB" id="HostDB:ENSMUSG00000057074"/>
<dbReference type="eggNOG" id="KOG1516">
    <property type="taxonomic scope" value="Eukaryota"/>
</dbReference>
<dbReference type="GeneTree" id="ENSGT00940000154623"/>
<dbReference type="HOGENOM" id="CLU_006586_13_0_1"/>
<dbReference type="InParanoid" id="Q8VCC2"/>
<dbReference type="OMA" id="IDERPYC"/>
<dbReference type="OrthoDB" id="3200163at2759"/>
<dbReference type="PhylomeDB" id="Q8VCC2"/>
<dbReference type="TreeFam" id="TF315470"/>
<dbReference type="BRENDA" id="3.1.1.1">
    <property type="organism ID" value="3474"/>
</dbReference>
<dbReference type="BioGRID-ORCS" id="12623">
    <property type="hits" value="2 hits in 77 CRISPR screens"/>
</dbReference>
<dbReference type="PRO" id="PR:Q8VCC2"/>
<dbReference type="Proteomes" id="UP000000589">
    <property type="component" value="Chromosome 8"/>
</dbReference>
<dbReference type="RNAct" id="Q8VCC2">
    <property type="molecule type" value="protein"/>
</dbReference>
<dbReference type="Bgee" id="ENSMUSG00000057074">
    <property type="expression patterns" value="Expressed in left lobe of liver and 41 other cell types or tissues"/>
</dbReference>
<dbReference type="ExpressionAtlas" id="Q8VCC2">
    <property type="expression patterns" value="baseline and differential"/>
</dbReference>
<dbReference type="GO" id="GO:0005737">
    <property type="term" value="C:cytoplasm"/>
    <property type="evidence" value="ECO:0000250"/>
    <property type="project" value="UniProtKB"/>
</dbReference>
<dbReference type="GO" id="GO:0005788">
    <property type="term" value="C:endoplasmic reticulum lumen"/>
    <property type="evidence" value="ECO:0007669"/>
    <property type="project" value="UniProtKB-SubCell"/>
</dbReference>
<dbReference type="GO" id="GO:0005811">
    <property type="term" value="C:lipid droplet"/>
    <property type="evidence" value="ECO:0000250"/>
    <property type="project" value="UniProtKB"/>
</dbReference>
<dbReference type="GO" id="GO:0106435">
    <property type="term" value="F:carboxylesterase activity"/>
    <property type="evidence" value="ECO:0007669"/>
    <property type="project" value="UniProtKB-EC"/>
</dbReference>
<dbReference type="GO" id="GO:0004771">
    <property type="term" value="F:sterol ester esterase activity"/>
    <property type="evidence" value="ECO:0000250"/>
    <property type="project" value="UniProtKB"/>
</dbReference>
<dbReference type="GO" id="GO:0008203">
    <property type="term" value="P:cholesterol metabolic process"/>
    <property type="evidence" value="ECO:0000250"/>
    <property type="project" value="UniProtKB"/>
</dbReference>
<dbReference type="GO" id="GO:0034378">
    <property type="term" value="P:chylomicron assembly"/>
    <property type="evidence" value="ECO:0000315"/>
    <property type="project" value="MGI"/>
</dbReference>
<dbReference type="GO" id="GO:0010887">
    <property type="term" value="P:negative regulation of cholesterol storage"/>
    <property type="evidence" value="ECO:0000250"/>
    <property type="project" value="UniProtKB"/>
</dbReference>
<dbReference type="GO" id="GO:0010875">
    <property type="term" value="P:positive regulation of cholesterol efflux"/>
    <property type="evidence" value="ECO:0000250"/>
    <property type="project" value="UniProtKB"/>
</dbReference>
<dbReference type="GO" id="GO:0090205">
    <property type="term" value="P:positive regulation of cholesterol metabolic process"/>
    <property type="evidence" value="ECO:0000250"/>
    <property type="project" value="UniProtKB"/>
</dbReference>
<dbReference type="GO" id="GO:0070857">
    <property type="term" value="P:regulation of bile acid biosynthetic process"/>
    <property type="evidence" value="ECO:0000250"/>
    <property type="project" value="UniProtKB"/>
</dbReference>
<dbReference type="GO" id="GO:0120188">
    <property type="term" value="P:regulation of bile acid secretion"/>
    <property type="evidence" value="ECO:0000250"/>
    <property type="project" value="UniProtKB"/>
</dbReference>
<dbReference type="GO" id="GO:0090320">
    <property type="term" value="P:regulation of chylomicron remnant clearance"/>
    <property type="evidence" value="ECO:0000315"/>
    <property type="project" value="MGI"/>
</dbReference>
<dbReference type="GO" id="GO:0010468">
    <property type="term" value="P:regulation of gene expression"/>
    <property type="evidence" value="ECO:0000315"/>
    <property type="project" value="MGI"/>
</dbReference>
<dbReference type="GO" id="GO:0090207">
    <property type="term" value="P:regulation of triglyceride metabolic process"/>
    <property type="evidence" value="ECO:0000315"/>
    <property type="project" value="MGI"/>
</dbReference>
<dbReference type="GO" id="GO:0009617">
    <property type="term" value="P:response to bacterium"/>
    <property type="evidence" value="ECO:0000270"/>
    <property type="project" value="MGI"/>
</dbReference>
<dbReference type="GO" id="GO:0043691">
    <property type="term" value="P:reverse cholesterol transport"/>
    <property type="evidence" value="ECO:0000250"/>
    <property type="project" value="UniProtKB"/>
</dbReference>
<dbReference type="CDD" id="cd00312">
    <property type="entry name" value="Esterase_lipase"/>
    <property type="match status" value="1"/>
</dbReference>
<dbReference type="FunFam" id="3.40.50.1820:FF:000011">
    <property type="entry name" value="Carboxylic ester hydrolase"/>
    <property type="match status" value="1"/>
</dbReference>
<dbReference type="Gene3D" id="3.40.50.1820">
    <property type="entry name" value="alpha/beta hydrolase"/>
    <property type="match status" value="1"/>
</dbReference>
<dbReference type="InterPro" id="IPR029058">
    <property type="entry name" value="AB_hydrolase_fold"/>
</dbReference>
<dbReference type="InterPro" id="IPR002018">
    <property type="entry name" value="CarbesteraseB"/>
</dbReference>
<dbReference type="InterPro" id="IPR019826">
    <property type="entry name" value="Carboxylesterase_B_AS"/>
</dbReference>
<dbReference type="InterPro" id="IPR019819">
    <property type="entry name" value="Carboxylesterase_B_CS"/>
</dbReference>
<dbReference type="InterPro" id="IPR050309">
    <property type="entry name" value="Type-B_Carboxylest/Lipase"/>
</dbReference>
<dbReference type="PANTHER" id="PTHR11559">
    <property type="entry name" value="CARBOXYLESTERASE"/>
    <property type="match status" value="1"/>
</dbReference>
<dbReference type="Pfam" id="PF00135">
    <property type="entry name" value="COesterase"/>
    <property type="match status" value="1"/>
</dbReference>
<dbReference type="SUPFAM" id="SSF53474">
    <property type="entry name" value="alpha/beta-Hydrolases"/>
    <property type="match status" value="1"/>
</dbReference>
<dbReference type="PROSITE" id="PS00122">
    <property type="entry name" value="CARBOXYLESTERASE_B_1"/>
    <property type="match status" value="1"/>
</dbReference>
<dbReference type="PROSITE" id="PS00941">
    <property type="entry name" value="CARBOXYLESTERASE_B_2"/>
    <property type="match status" value="1"/>
</dbReference>
<organism>
    <name type="scientific">Mus musculus</name>
    <name type="common">Mouse</name>
    <dbReference type="NCBI Taxonomy" id="10090"/>
    <lineage>
        <taxon>Eukaryota</taxon>
        <taxon>Metazoa</taxon>
        <taxon>Chordata</taxon>
        <taxon>Craniata</taxon>
        <taxon>Vertebrata</taxon>
        <taxon>Euteleostomi</taxon>
        <taxon>Mammalia</taxon>
        <taxon>Eutheria</taxon>
        <taxon>Euarchontoglires</taxon>
        <taxon>Glires</taxon>
        <taxon>Rodentia</taxon>
        <taxon>Myomorpha</taxon>
        <taxon>Muroidea</taxon>
        <taxon>Muridae</taxon>
        <taxon>Murinae</taxon>
        <taxon>Mus</taxon>
        <taxon>Mus</taxon>
    </lineage>
</organism>
<evidence type="ECO:0000250" key="1"/>
<evidence type="ECO:0000250" key="2">
    <source>
        <dbReference type="UniProtKB" id="P23141"/>
    </source>
</evidence>
<evidence type="ECO:0000255" key="3"/>
<evidence type="ECO:0000255" key="4">
    <source>
        <dbReference type="PROSITE-ProRule" id="PRU10039"/>
    </source>
</evidence>
<evidence type="ECO:0000269" key="5">
    <source>
    </source>
</evidence>
<evidence type="ECO:0000303" key="6">
    <source>
    </source>
</evidence>
<evidence type="ECO:0000305" key="7"/>
<evidence type="ECO:0000312" key="8">
    <source>
        <dbReference type="MGI" id="MGI:88378"/>
    </source>
</evidence>
<protein>
    <recommendedName>
        <fullName evidence="7">Liver carboxylesterase 1</fullName>
        <ecNumber evidence="2">3.1.1.1</ecNumber>
    </recommendedName>
    <alternativeName>
        <fullName evidence="2">Acyl-coenzyme A:cholesterol acyltransferase</fullName>
    </alternativeName>
    <alternativeName>
        <fullName>Carboxylesterase 1G</fullName>
    </alternativeName>
    <alternativeName>
        <fullName evidence="2">Cholesteryl ester hydrolase</fullName>
        <shortName evidence="2">CEH</shortName>
        <ecNumber evidence="2">3.1.1.13</ecNumber>
    </alternativeName>
    <alternativeName>
        <fullName evidence="6">ES-x</fullName>
    </alternativeName>
</protein>